<keyword id="KW-0997">Cell inner membrane</keyword>
<keyword id="KW-1003">Cell membrane</keyword>
<keyword id="KW-0342">GTP-binding</keyword>
<keyword id="KW-0378">Hydrolase</keyword>
<keyword id="KW-0472">Membrane</keyword>
<keyword id="KW-0547">Nucleotide-binding</keyword>
<keyword id="KW-0648">Protein biosynthesis</keyword>
<keyword id="KW-1185">Reference proteome</keyword>
<feature type="chain" id="PRO_0000224762" description="Elongation factor 4">
    <location>
        <begin position="1"/>
        <end position="594"/>
    </location>
</feature>
<feature type="domain" description="tr-type G">
    <location>
        <begin position="2"/>
        <end position="184"/>
    </location>
</feature>
<feature type="binding site" evidence="1">
    <location>
        <begin position="14"/>
        <end position="19"/>
    </location>
    <ligand>
        <name>GTP</name>
        <dbReference type="ChEBI" id="CHEBI:37565"/>
    </ligand>
</feature>
<feature type="binding site" evidence="1">
    <location>
        <begin position="131"/>
        <end position="134"/>
    </location>
    <ligand>
        <name>GTP</name>
        <dbReference type="ChEBI" id="CHEBI:37565"/>
    </ligand>
</feature>
<organism>
    <name type="scientific">Francisella tularensis subsp. tularensis (strain SCHU S4 / Schu 4)</name>
    <dbReference type="NCBI Taxonomy" id="177416"/>
    <lineage>
        <taxon>Bacteria</taxon>
        <taxon>Pseudomonadati</taxon>
        <taxon>Pseudomonadota</taxon>
        <taxon>Gammaproteobacteria</taxon>
        <taxon>Thiotrichales</taxon>
        <taxon>Francisellaceae</taxon>
        <taxon>Francisella</taxon>
    </lineage>
</organism>
<gene>
    <name evidence="1" type="primary">lepA</name>
    <name type="ordered locus">FTT_1678c</name>
</gene>
<accession>Q5NEF8</accession>
<proteinExistence type="inferred from homology"/>
<protein>
    <recommendedName>
        <fullName evidence="1">Elongation factor 4</fullName>
        <shortName evidence="1">EF-4</shortName>
        <ecNumber evidence="1">3.6.5.n1</ecNumber>
    </recommendedName>
    <alternativeName>
        <fullName evidence="1">Ribosomal back-translocase LepA</fullName>
    </alternativeName>
</protein>
<name>LEPA_FRATT</name>
<reference key="1">
    <citation type="journal article" date="2005" name="Nat. Genet.">
        <title>The complete genome sequence of Francisella tularensis, the causative agent of tularemia.</title>
        <authorList>
            <person name="Larsson P."/>
            <person name="Oyston P.C.F."/>
            <person name="Chain P."/>
            <person name="Chu M.C."/>
            <person name="Duffield M."/>
            <person name="Fuxelius H.-H."/>
            <person name="Garcia E."/>
            <person name="Haelltorp G."/>
            <person name="Johansson D."/>
            <person name="Isherwood K.E."/>
            <person name="Karp P.D."/>
            <person name="Larsson E."/>
            <person name="Liu Y."/>
            <person name="Michell S."/>
            <person name="Prior J."/>
            <person name="Prior R."/>
            <person name="Malfatti S."/>
            <person name="Sjoestedt A."/>
            <person name="Svensson K."/>
            <person name="Thompson N."/>
            <person name="Vergez L."/>
            <person name="Wagg J.K."/>
            <person name="Wren B.W."/>
            <person name="Lindler L.E."/>
            <person name="Andersson S.G.E."/>
            <person name="Forsman M."/>
            <person name="Titball R.W."/>
        </authorList>
    </citation>
    <scope>NUCLEOTIDE SEQUENCE [LARGE SCALE GENOMIC DNA]</scope>
    <source>
        <strain>SCHU S4 / Schu 4</strain>
    </source>
</reference>
<evidence type="ECO:0000255" key="1">
    <source>
        <dbReference type="HAMAP-Rule" id="MF_00071"/>
    </source>
</evidence>
<sequence length="594" mass="65513">MKNIRNFSIIAHIDHGKSTLSDRFIQVCNGLSEREMKEQVLDSMDIERERGITIKAQSVTLDYTARDGQTYQLNFIDTPGHVDFSYEVSRSLAACEGALLVVDAAQGVEAQTVANCYTAIEQNLEVIPILNKIDLPSAEPDRVAQEIEEIIGIDATGATTCSAKIGIGVEDVLETIVAKVPAPEGDVNAKLQALIIDSWFDNYLGVVSLVRVKNGTIKKGEKFKVMSTGVAYQVDRLGVFTPKMKDLDHLKAGEVGFIVAGIKDIHGAPVGDTLTHAHNPTDKPVPGFKKVQPQVYAGMFTISSDDYPDFREALEKLSLNDASLFFEPEVSQALGFGFRCGFLGMLHMEIIQERLEREYNLDLITSAPTVVYKAIKKDGEIIEVDNLSKLPEPGAIAEIQEPIVRANILVPKDYVGSVITICIEKRGVQVDLNYVGNQVSITYDLPMIEVVSDFFDTLKSVTKGYGSLDYELIRYEPANMVCLDVLINGDKVDALASIVHKDQAKYKGRELVERLKELIPRQMFEVAIQAAIGGTIVARSTVKALRKNVLAKCYGGDVSRKKKLLEKQKEGKKRMKNIGSVEIPQEAFLSVLKK</sequence>
<comment type="function">
    <text evidence="1">Required for accurate and efficient protein synthesis under certain stress conditions. May act as a fidelity factor of the translation reaction, by catalyzing a one-codon backward translocation of tRNAs on improperly translocated ribosomes. Back-translocation proceeds from a post-translocation (POST) complex to a pre-translocation (PRE) complex, thus giving elongation factor G a second chance to translocate the tRNAs correctly. Binds to ribosomes in a GTP-dependent manner.</text>
</comment>
<comment type="catalytic activity">
    <reaction evidence="1">
        <text>GTP + H2O = GDP + phosphate + H(+)</text>
        <dbReference type="Rhea" id="RHEA:19669"/>
        <dbReference type="ChEBI" id="CHEBI:15377"/>
        <dbReference type="ChEBI" id="CHEBI:15378"/>
        <dbReference type="ChEBI" id="CHEBI:37565"/>
        <dbReference type="ChEBI" id="CHEBI:43474"/>
        <dbReference type="ChEBI" id="CHEBI:58189"/>
        <dbReference type="EC" id="3.6.5.n1"/>
    </reaction>
</comment>
<comment type="subcellular location">
    <subcellularLocation>
        <location evidence="1">Cell inner membrane</location>
        <topology evidence="1">Peripheral membrane protein</topology>
        <orientation evidence="1">Cytoplasmic side</orientation>
    </subcellularLocation>
</comment>
<comment type="similarity">
    <text evidence="1">Belongs to the TRAFAC class translation factor GTPase superfamily. Classic translation factor GTPase family. LepA subfamily.</text>
</comment>
<dbReference type="EC" id="3.6.5.n1" evidence="1"/>
<dbReference type="EMBL" id="AJ749949">
    <property type="protein sequence ID" value="CAG46311.1"/>
    <property type="molecule type" value="Genomic_DNA"/>
</dbReference>
<dbReference type="RefSeq" id="WP_003022642.1">
    <property type="nucleotide sequence ID" value="NC_006570.2"/>
</dbReference>
<dbReference type="RefSeq" id="YP_170584.1">
    <property type="nucleotide sequence ID" value="NC_006570.2"/>
</dbReference>
<dbReference type="SMR" id="Q5NEF8"/>
<dbReference type="STRING" id="177416.FTT_1678c"/>
<dbReference type="DNASU" id="3192146"/>
<dbReference type="EnsemblBacteria" id="CAG46311">
    <property type="protein sequence ID" value="CAG46311"/>
    <property type="gene ID" value="FTT_1678c"/>
</dbReference>
<dbReference type="KEGG" id="ftu:FTT_1678c"/>
<dbReference type="eggNOG" id="COG0481">
    <property type="taxonomic scope" value="Bacteria"/>
</dbReference>
<dbReference type="OrthoDB" id="5619066at2"/>
<dbReference type="Proteomes" id="UP000001174">
    <property type="component" value="Chromosome"/>
</dbReference>
<dbReference type="GO" id="GO:0005886">
    <property type="term" value="C:plasma membrane"/>
    <property type="evidence" value="ECO:0007669"/>
    <property type="project" value="UniProtKB-SubCell"/>
</dbReference>
<dbReference type="GO" id="GO:0005525">
    <property type="term" value="F:GTP binding"/>
    <property type="evidence" value="ECO:0007669"/>
    <property type="project" value="UniProtKB-UniRule"/>
</dbReference>
<dbReference type="GO" id="GO:0003924">
    <property type="term" value="F:GTPase activity"/>
    <property type="evidence" value="ECO:0007669"/>
    <property type="project" value="UniProtKB-UniRule"/>
</dbReference>
<dbReference type="GO" id="GO:0097216">
    <property type="term" value="F:guanosine tetraphosphate binding"/>
    <property type="evidence" value="ECO:0007669"/>
    <property type="project" value="UniProtKB-ARBA"/>
</dbReference>
<dbReference type="GO" id="GO:0043022">
    <property type="term" value="F:ribosome binding"/>
    <property type="evidence" value="ECO:0007669"/>
    <property type="project" value="UniProtKB-UniRule"/>
</dbReference>
<dbReference type="GO" id="GO:0003746">
    <property type="term" value="F:translation elongation factor activity"/>
    <property type="evidence" value="ECO:0007669"/>
    <property type="project" value="UniProtKB-UniRule"/>
</dbReference>
<dbReference type="GO" id="GO:0045727">
    <property type="term" value="P:positive regulation of translation"/>
    <property type="evidence" value="ECO:0007669"/>
    <property type="project" value="UniProtKB-UniRule"/>
</dbReference>
<dbReference type="CDD" id="cd03699">
    <property type="entry name" value="EF4_II"/>
    <property type="match status" value="1"/>
</dbReference>
<dbReference type="CDD" id="cd16260">
    <property type="entry name" value="EF4_III"/>
    <property type="match status" value="1"/>
</dbReference>
<dbReference type="CDD" id="cd01890">
    <property type="entry name" value="LepA"/>
    <property type="match status" value="1"/>
</dbReference>
<dbReference type="CDD" id="cd03709">
    <property type="entry name" value="lepA_C"/>
    <property type="match status" value="1"/>
</dbReference>
<dbReference type="FunFam" id="3.40.50.300:FF:000078">
    <property type="entry name" value="Elongation factor 4"/>
    <property type="match status" value="1"/>
</dbReference>
<dbReference type="FunFam" id="2.40.30.10:FF:000015">
    <property type="entry name" value="Translation factor GUF1, mitochondrial"/>
    <property type="match status" value="1"/>
</dbReference>
<dbReference type="FunFam" id="3.30.70.240:FF:000007">
    <property type="entry name" value="Translation factor GUF1, mitochondrial"/>
    <property type="match status" value="1"/>
</dbReference>
<dbReference type="FunFam" id="3.30.70.2570:FF:000001">
    <property type="entry name" value="Translation factor GUF1, mitochondrial"/>
    <property type="match status" value="1"/>
</dbReference>
<dbReference type="FunFam" id="3.30.70.870:FF:000004">
    <property type="entry name" value="Translation factor GUF1, mitochondrial"/>
    <property type="match status" value="1"/>
</dbReference>
<dbReference type="Gene3D" id="3.30.70.240">
    <property type="match status" value="1"/>
</dbReference>
<dbReference type="Gene3D" id="3.30.70.2570">
    <property type="entry name" value="Elongation factor 4, C-terminal domain"/>
    <property type="match status" value="1"/>
</dbReference>
<dbReference type="Gene3D" id="3.30.70.870">
    <property type="entry name" value="Elongation Factor G (Translational Gtpase), domain 3"/>
    <property type="match status" value="1"/>
</dbReference>
<dbReference type="Gene3D" id="3.40.50.300">
    <property type="entry name" value="P-loop containing nucleotide triphosphate hydrolases"/>
    <property type="match status" value="1"/>
</dbReference>
<dbReference type="Gene3D" id="2.40.30.10">
    <property type="entry name" value="Translation factors"/>
    <property type="match status" value="1"/>
</dbReference>
<dbReference type="HAMAP" id="MF_00071">
    <property type="entry name" value="LepA"/>
    <property type="match status" value="1"/>
</dbReference>
<dbReference type="InterPro" id="IPR006297">
    <property type="entry name" value="EF-4"/>
</dbReference>
<dbReference type="InterPro" id="IPR035647">
    <property type="entry name" value="EFG_III/V"/>
</dbReference>
<dbReference type="InterPro" id="IPR000640">
    <property type="entry name" value="EFG_V-like"/>
</dbReference>
<dbReference type="InterPro" id="IPR004161">
    <property type="entry name" value="EFTu-like_2"/>
</dbReference>
<dbReference type="InterPro" id="IPR031157">
    <property type="entry name" value="G_TR_CS"/>
</dbReference>
<dbReference type="InterPro" id="IPR038363">
    <property type="entry name" value="LepA_C_sf"/>
</dbReference>
<dbReference type="InterPro" id="IPR013842">
    <property type="entry name" value="LepA_CTD"/>
</dbReference>
<dbReference type="InterPro" id="IPR035654">
    <property type="entry name" value="LepA_IV"/>
</dbReference>
<dbReference type="InterPro" id="IPR027417">
    <property type="entry name" value="P-loop_NTPase"/>
</dbReference>
<dbReference type="InterPro" id="IPR005225">
    <property type="entry name" value="Small_GTP-bd"/>
</dbReference>
<dbReference type="InterPro" id="IPR000795">
    <property type="entry name" value="T_Tr_GTP-bd_dom"/>
</dbReference>
<dbReference type="NCBIfam" id="TIGR01393">
    <property type="entry name" value="lepA"/>
    <property type="match status" value="1"/>
</dbReference>
<dbReference type="NCBIfam" id="TIGR00231">
    <property type="entry name" value="small_GTP"/>
    <property type="match status" value="1"/>
</dbReference>
<dbReference type="PANTHER" id="PTHR43512:SF4">
    <property type="entry name" value="TRANSLATION FACTOR GUF1 HOMOLOG, CHLOROPLASTIC"/>
    <property type="match status" value="1"/>
</dbReference>
<dbReference type="PANTHER" id="PTHR43512">
    <property type="entry name" value="TRANSLATION FACTOR GUF1-RELATED"/>
    <property type="match status" value="1"/>
</dbReference>
<dbReference type="Pfam" id="PF00679">
    <property type="entry name" value="EFG_C"/>
    <property type="match status" value="1"/>
</dbReference>
<dbReference type="Pfam" id="PF00009">
    <property type="entry name" value="GTP_EFTU"/>
    <property type="match status" value="1"/>
</dbReference>
<dbReference type="Pfam" id="PF03144">
    <property type="entry name" value="GTP_EFTU_D2"/>
    <property type="match status" value="1"/>
</dbReference>
<dbReference type="Pfam" id="PF06421">
    <property type="entry name" value="LepA_C"/>
    <property type="match status" value="1"/>
</dbReference>
<dbReference type="PRINTS" id="PR00315">
    <property type="entry name" value="ELONGATNFCT"/>
</dbReference>
<dbReference type="SUPFAM" id="SSF54980">
    <property type="entry name" value="EF-G C-terminal domain-like"/>
    <property type="match status" value="2"/>
</dbReference>
<dbReference type="SUPFAM" id="SSF52540">
    <property type="entry name" value="P-loop containing nucleoside triphosphate hydrolases"/>
    <property type="match status" value="1"/>
</dbReference>
<dbReference type="PROSITE" id="PS00301">
    <property type="entry name" value="G_TR_1"/>
    <property type="match status" value="1"/>
</dbReference>
<dbReference type="PROSITE" id="PS51722">
    <property type="entry name" value="G_TR_2"/>
    <property type="match status" value="1"/>
</dbReference>